<feature type="chain" id="PRO_0000363849" description="ABC transporter C family member 3">
    <location>
        <begin position="1"/>
        <end position="1412"/>
    </location>
</feature>
<feature type="transmembrane region" description="Helical" evidence="2">
    <location>
        <begin position="115"/>
        <end position="135"/>
    </location>
</feature>
<feature type="transmembrane region" description="Helical" evidence="2">
    <location>
        <begin position="161"/>
        <end position="181"/>
    </location>
</feature>
<feature type="transmembrane region" description="Helical" evidence="2">
    <location>
        <begin position="236"/>
        <end position="256"/>
    </location>
</feature>
<feature type="transmembrane region" description="Helical" evidence="2">
    <location>
        <begin position="261"/>
        <end position="281"/>
    </location>
</feature>
<feature type="transmembrane region" description="Helical" evidence="2">
    <location>
        <begin position="346"/>
        <end position="366"/>
    </location>
</feature>
<feature type="transmembrane region" description="Helical" evidence="2">
    <location>
        <begin position="379"/>
        <end position="399"/>
    </location>
</feature>
<feature type="transmembrane region" description="Helical" evidence="2">
    <location>
        <begin position="724"/>
        <end position="744"/>
    </location>
</feature>
<feature type="transmembrane region" description="Helical" evidence="2">
    <location>
        <begin position="787"/>
        <end position="807"/>
    </location>
</feature>
<feature type="transmembrane region" description="Helical" evidence="2">
    <location>
        <begin position="854"/>
        <end position="874"/>
    </location>
</feature>
<feature type="transmembrane region" description="Helical" evidence="2">
    <location>
        <begin position="875"/>
        <end position="895"/>
    </location>
</feature>
<feature type="transmembrane region" description="Helical" evidence="2">
    <location>
        <begin position="967"/>
        <end position="987"/>
    </location>
</feature>
<feature type="domain" description="ABC transmembrane type-1 1" evidence="2">
    <location>
        <begin position="119"/>
        <end position="405"/>
    </location>
</feature>
<feature type="domain" description="ABC transporter 1" evidence="1">
    <location>
        <begin position="439"/>
        <end position="662"/>
    </location>
</feature>
<feature type="domain" description="ABC transmembrane type-1 2" evidence="2">
    <location>
        <begin position="735"/>
        <end position="1025"/>
    </location>
</feature>
<feature type="domain" description="ABC transporter 2" evidence="1">
    <location>
        <begin position="1062"/>
        <end position="1296"/>
    </location>
</feature>
<feature type="region of interest" description="Disordered" evidence="3">
    <location>
        <begin position="1"/>
        <end position="34"/>
    </location>
</feature>
<feature type="region of interest" description="Disordered" evidence="3">
    <location>
        <begin position="1316"/>
        <end position="1412"/>
    </location>
</feature>
<feature type="compositionally biased region" description="Basic residues" evidence="3">
    <location>
        <begin position="21"/>
        <end position="34"/>
    </location>
</feature>
<feature type="compositionally biased region" description="Polar residues" evidence="3">
    <location>
        <begin position="1342"/>
        <end position="1351"/>
    </location>
</feature>
<feature type="compositionally biased region" description="Low complexity" evidence="3">
    <location>
        <begin position="1367"/>
        <end position="1397"/>
    </location>
</feature>
<feature type="compositionally biased region" description="Acidic residues" evidence="3">
    <location>
        <begin position="1398"/>
        <end position="1412"/>
    </location>
</feature>
<feature type="binding site" evidence="1">
    <location>
        <begin position="474"/>
        <end position="481"/>
    </location>
    <ligand>
        <name>ATP</name>
        <dbReference type="ChEBI" id="CHEBI:30616"/>
    </ligand>
</feature>
<feature type="binding site" evidence="1">
    <location>
        <begin position="1096"/>
        <end position="1103"/>
    </location>
    <ligand>
        <name>ATP</name>
        <dbReference type="ChEBI" id="CHEBI:30616"/>
    </ligand>
</feature>
<feature type="sequence conflict" description="In Ref. 1; AAL85706." evidence="4" ref="1">
    <location>
        <begin position="191"/>
        <end position="212"/>
    </location>
</feature>
<evidence type="ECO:0000255" key="1">
    <source>
        <dbReference type="PROSITE-ProRule" id="PRU00434"/>
    </source>
</evidence>
<evidence type="ECO:0000255" key="2">
    <source>
        <dbReference type="PROSITE-ProRule" id="PRU00441"/>
    </source>
</evidence>
<evidence type="ECO:0000256" key="3">
    <source>
        <dbReference type="SAM" id="MobiDB-lite"/>
    </source>
</evidence>
<evidence type="ECO:0000305" key="4"/>
<gene>
    <name type="primary">abcC3</name>
    <name type="ORF">DDB_G0287691</name>
</gene>
<dbReference type="EMBL" id="AF474335">
    <property type="protein sequence ID" value="AAL85706.1"/>
    <property type="molecule type" value="Genomic_DNA"/>
</dbReference>
<dbReference type="EMBL" id="AAFI02000104">
    <property type="protein sequence ID" value="EAL63492.1"/>
    <property type="molecule type" value="Genomic_DNA"/>
</dbReference>
<dbReference type="RefSeq" id="XP_637090.1">
    <property type="nucleotide sequence ID" value="XM_631998.1"/>
</dbReference>
<dbReference type="SMR" id="Q54JR2"/>
<dbReference type="FunCoup" id="Q54JR2">
    <property type="interactions" value="59"/>
</dbReference>
<dbReference type="STRING" id="44689.Q54JR2"/>
<dbReference type="GlyGen" id="Q54JR2">
    <property type="glycosylation" value="1 site"/>
</dbReference>
<dbReference type="PaxDb" id="44689-DDB0216251"/>
<dbReference type="EnsemblProtists" id="EAL63492">
    <property type="protein sequence ID" value="EAL63492"/>
    <property type="gene ID" value="DDB_G0287691"/>
</dbReference>
<dbReference type="GeneID" id="8626345"/>
<dbReference type="KEGG" id="ddi:DDB_G0287691"/>
<dbReference type="dictyBase" id="DDB_G0287691">
    <property type="gene designation" value="abcC3"/>
</dbReference>
<dbReference type="VEuPathDB" id="AmoebaDB:DDB_G0287691"/>
<dbReference type="eggNOG" id="KOG0054">
    <property type="taxonomic scope" value="Eukaryota"/>
</dbReference>
<dbReference type="HOGENOM" id="CLU_000604_27_3_1"/>
<dbReference type="InParanoid" id="Q54JR2"/>
<dbReference type="OMA" id="QVTDAWT"/>
<dbReference type="PhylomeDB" id="Q54JR2"/>
<dbReference type="Reactome" id="R-DDI-159418">
    <property type="pathway name" value="Recycling of bile acids and salts"/>
</dbReference>
<dbReference type="Reactome" id="R-DDI-1660661">
    <property type="pathway name" value="Sphingolipid de novo biosynthesis"/>
</dbReference>
<dbReference type="Reactome" id="R-DDI-189483">
    <property type="pathway name" value="Heme degradation"/>
</dbReference>
<dbReference type="Reactome" id="R-DDI-2142691">
    <property type="pathway name" value="Synthesis of Leukotrienes (LT) and Eoxins (EX)"/>
</dbReference>
<dbReference type="Reactome" id="R-DDI-382556">
    <property type="pathway name" value="ABC-family proteins mediated transport"/>
</dbReference>
<dbReference type="Reactome" id="R-DDI-9707564">
    <property type="pathway name" value="Cytoprotection by HMOX1"/>
</dbReference>
<dbReference type="Reactome" id="R-DDI-9749641">
    <property type="pathway name" value="Aspirin ADME"/>
</dbReference>
<dbReference type="Reactome" id="R-DDI-9753281">
    <property type="pathway name" value="Paracetamol ADME"/>
</dbReference>
<dbReference type="Reactome" id="R-DDI-9754706">
    <property type="pathway name" value="Atorvastatin ADME"/>
</dbReference>
<dbReference type="Reactome" id="R-DDI-9758890">
    <property type="pathway name" value="Transport of RCbl within the body"/>
</dbReference>
<dbReference type="PRO" id="PR:Q54JR2"/>
<dbReference type="Proteomes" id="UP000002195">
    <property type="component" value="Chromosome 5"/>
</dbReference>
<dbReference type="GO" id="GO:0016020">
    <property type="term" value="C:membrane"/>
    <property type="evidence" value="ECO:0000318"/>
    <property type="project" value="GO_Central"/>
</dbReference>
<dbReference type="GO" id="GO:0140359">
    <property type="term" value="F:ABC-type transporter activity"/>
    <property type="evidence" value="ECO:0007669"/>
    <property type="project" value="InterPro"/>
</dbReference>
<dbReference type="GO" id="GO:0005524">
    <property type="term" value="F:ATP binding"/>
    <property type="evidence" value="ECO:0007669"/>
    <property type="project" value="UniProtKB-KW"/>
</dbReference>
<dbReference type="GO" id="GO:0016887">
    <property type="term" value="F:ATP hydrolysis activity"/>
    <property type="evidence" value="ECO:0007669"/>
    <property type="project" value="InterPro"/>
</dbReference>
<dbReference type="GO" id="GO:0042626">
    <property type="term" value="F:ATPase-coupled transmembrane transporter activity"/>
    <property type="evidence" value="ECO:0000318"/>
    <property type="project" value="GO_Central"/>
</dbReference>
<dbReference type="GO" id="GO:0031154">
    <property type="term" value="P:culmination involved in sorocarp development"/>
    <property type="evidence" value="ECO:0000315"/>
    <property type="project" value="dictyBase"/>
</dbReference>
<dbReference type="GO" id="GO:0055085">
    <property type="term" value="P:transmembrane transport"/>
    <property type="evidence" value="ECO:0000318"/>
    <property type="project" value="GO_Central"/>
</dbReference>
<dbReference type="CDD" id="cd18579">
    <property type="entry name" value="ABC_6TM_ABCC_D1"/>
    <property type="match status" value="1"/>
</dbReference>
<dbReference type="CDD" id="cd18580">
    <property type="entry name" value="ABC_6TM_ABCC_D2"/>
    <property type="match status" value="1"/>
</dbReference>
<dbReference type="CDD" id="cd03250">
    <property type="entry name" value="ABCC_MRP_domain1"/>
    <property type="match status" value="1"/>
</dbReference>
<dbReference type="CDD" id="cd03244">
    <property type="entry name" value="ABCC_MRP_domain2"/>
    <property type="match status" value="1"/>
</dbReference>
<dbReference type="FunFam" id="1.20.1560.10:FF:000024">
    <property type="entry name" value="ABC transporter C family member 2"/>
    <property type="match status" value="1"/>
</dbReference>
<dbReference type="FunFam" id="3.40.50.300:FF:002981">
    <property type="entry name" value="ABC transporter C family member 5"/>
    <property type="match status" value="1"/>
</dbReference>
<dbReference type="FunFam" id="1.20.1560.10:FF:000010">
    <property type="entry name" value="Multidrug resistance-associated ABC transporter"/>
    <property type="match status" value="1"/>
</dbReference>
<dbReference type="FunFam" id="3.40.50.300:FF:000163">
    <property type="entry name" value="Multidrug resistance-associated protein member 4"/>
    <property type="match status" value="1"/>
</dbReference>
<dbReference type="Gene3D" id="1.20.1560.10">
    <property type="entry name" value="ABC transporter type 1, transmembrane domain"/>
    <property type="match status" value="2"/>
</dbReference>
<dbReference type="Gene3D" id="3.40.50.300">
    <property type="entry name" value="P-loop containing nucleotide triphosphate hydrolases"/>
    <property type="match status" value="2"/>
</dbReference>
<dbReference type="InterPro" id="IPR003593">
    <property type="entry name" value="AAA+_ATPase"/>
</dbReference>
<dbReference type="InterPro" id="IPR011527">
    <property type="entry name" value="ABC1_TM_dom"/>
</dbReference>
<dbReference type="InterPro" id="IPR036640">
    <property type="entry name" value="ABC1_TM_sf"/>
</dbReference>
<dbReference type="InterPro" id="IPR003439">
    <property type="entry name" value="ABC_transporter-like_ATP-bd"/>
</dbReference>
<dbReference type="InterPro" id="IPR017871">
    <property type="entry name" value="ABC_transporter-like_CS"/>
</dbReference>
<dbReference type="InterPro" id="IPR050173">
    <property type="entry name" value="ABC_transporter_C-like"/>
</dbReference>
<dbReference type="InterPro" id="IPR044746">
    <property type="entry name" value="ABCC_6TM_D1"/>
</dbReference>
<dbReference type="InterPro" id="IPR044726">
    <property type="entry name" value="ABCC_6TM_D2"/>
</dbReference>
<dbReference type="InterPro" id="IPR027417">
    <property type="entry name" value="P-loop_NTPase"/>
</dbReference>
<dbReference type="PANTHER" id="PTHR24223:SF329">
    <property type="entry name" value="ABC TRANSPORTER C FAMILY MEMBER 10-RELATED"/>
    <property type="match status" value="1"/>
</dbReference>
<dbReference type="PANTHER" id="PTHR24223">
    <property type="entry name" value="ATP-BINDING CASSETTE SUB-FAMILY C"/>
    <property type="match status" value="1"/>
</dbReference>
<dbReference type="Pfam" id="PF00664">
    <property type="entry name" value="ABC_membrane"/>
    <property type="match status" value="2"/>
</dbReference>
<dbReference type="Pfam" id="PF00005">
    <property type="entry name" value="ABC_tran"/>
    <property type="match status" value="2"/>
</dbReference>
<dbReference type="SMART" id="SM00382">
    <property type="entry name" value="AAA"/>
    <property type="match status" value="2"/>
</dbReference>
<dbReference type="SUPFAM" id="SSF90123">
    <property type="entry name" value="ABC transporter transmembrane region"/>
    <property type="match status" value="2"/>
</dbReference>
<dbReference type="SUPFAM" id="SSF52540">
    <property type="entry name" value="P-loop containing nucleoside triphosphate hydrolases"/>
    <property type="match status" value="2"/>
</dbReference>
<dbReference type="PROSITE" id="PS50929">
    <property type="entry name" value="ABC_TM1F"/>
    <property type="match status" value="2"/>
</dbReference>
<dbReference type="PROSITE" id="PS00211">
    <property type="entry name" value="ABC_TRANSPORTER_1"/>
    <property type="match status" value="1"/>
</dbReference>
<dbReference type="PROSITE" id="PS50893">
    <property type="entry name" value="ABC_TRANSPORTER_2"/>
    <property type="match status" value="2"/>
</dbReference>
<name>ABCC3_DICDI</name>
<accession>Q54JR2</accession>
<accession>Q8T6H6</accession>
<organism>
    <name type="scientific">Dictyostelium discoideum</name>
    <name type="common">Social amoeba</name>
    <dbReference type="NCBI Taxonomy" id="44689"/>
    <lineage>
        <taxon>Eukaryota</taxon>
        <taxon>Amoebozoa</taxon>
        <taxon>Evosea</taxon>
        <taxon>Eumycetozoa</taxon>
        <taxon>Dictyostelia</taxon>
        <taxon>Dictyosteliales</taxon>
        <taxon>Dictyosteliaceae</taxon>
        <taxon>Dictyostelium</taxon>
    </lineage>
</organism>
<comment type="subcellular location">
    <subcellularLocation>
        <location evidence="2">Membrane</location>
        <topology evidence="2">Multi-pass membrane protein</topology>
    </subcellularLocation>
</comment>
<comment type="similarity">
    <text evidence="4">Belongs to the ABC transporter superfamily. ABCC family. Conjugate transporter (TC 3.A.1.208) subfamily.</text>
</comment>
<keyword id="KW-0067">ATP-binding</keyword>
<keyword id="KW-0472">Membrane</keyword>
<keyword id="KW-0547">Nucleotide-binding</keyword>
<keyword id="KW-1185">Reference proteome</keyword>
<keyword id="KW-0677">Repeat</keyword>
<keyword id="KW-0812">Transmembrane</keyword>
<keyword id="KW-1133">Transmembrane helix</keyword>
<keyword id="KW-0813">Transport</keyword>
<proteinExistence type="inferred from homology"/>
<protein>
    <recommendedName>
        <fullName>ABC transporter C family member 3</fullName>
    </recommendedName>
    <alternativeName>
        <fullName>ABC transporter ABCC.3</fullName>
    </alternativeName>
</protein>
<reference key="1">
    <citation type="journal article" date="2002" name="Eukaryot. Cell">
        <title>Evolutionary analyses of ABC transporters of Dictyostelium discoideum.</title>
        <authorList>
            <person name="Anjard C."/>
            <person name="Loomis W.F."/>
        </authorList>
    </citation>
    <scope>NUCLEOTIDE SEQUENCE [GENOMIC DNA]</scope>
    <scope>NOMENCLATURE</scope>
    <source>
        <strain>AX4</strain>
    </source>
</reference>
<reference key="2">
    <citation type="journal article" date="2005" name="Nature">
        <title>The genome of the social amoeba Dictyostelium discoideum.</title>
        <authorList>
            <person name="Eichinger L."/>
            <person name="Pachebat J.A."/>
            <person name="Gloeckner G."/>
            <person name="Rajandream M.A."/>
            <person name="Sucgang R."/>
            <person name="Berriman M."/>
            <person name="Song J."/>
            <person name="Olsen R."/>
            <person name="Szafranski K."/>
            <person name="Xu Q."/>
            <person name="Tunggal B."/>
            <person name="Kummerfeld S."/>
            <person name="Madera M."/>
            <person name="Konfortov B.A."/>
            <person name="Rivero F."/>
            <person name="Bankier A.T."/>
            <person name="Lehmann R."/>
            <person name="Hamlin N."/>
            <person name="Davies R."/>
            <person name="Gaudet P."/>
            <person name="Fey P."/>
            <person name="Pilcher K."/>
            <person name="Chen G."/>
            <person name="Saunders D."/>
            <person name="Sodergren E.J."/>
            <person name="Davis P."/>
            <person name="Kerhornou A."/>
            <person name="Nie X."/>
            <person name="Hall N."/>
            <person name="Anjard C."/>
            <person name="Hemphill L."/>
            <person name="Bason N."/>
            <person name="Farbrother P."/>
            <person name="Desany B."/>
            <person name="Just E."/>
            <person name="Morio T."/>
            <person name="Rost R."/>
            <person name="Churcher C.M."/>
            <person name="Cooper J."/>
            <person name="Haydock S."/>
            <person name="van Driessche N."/>
            <person name="Cronin A."/>
            <person name="Goodhead I."/>
            <person name="Muzny D.M."/>
            <person name="Mourier T."/>
            <person name="Pain A."/>
            <person name="Lu M."/>
            <person name="Harper D."/>
            <person name="Lindsay R."/>
            <person name="Hauser H."/>
            <person name="James K.D."/>
            <person name="Quiles M."/>
            <person name="Madan Babu M."/>
            <person name="Saito T."/>
            <person name="Buchrieser C."/>
            <person name="Wardroper A."/>
            <person name="Felder M."/>
            <person name="Thangavelu M."/>
            <person name="Johnson D."/>
            <person name="Knights A."/>
            <person name="Loulseged H."/>
            <person name="Mungall K.L."/>
            <person name="Oliver K."/>
            <person name="Price C."/>
            <person name="Quail M.A."/>
            <person name="Urushihara H."/>
            <person name="Hernandez J."/>
            <person name="Rabbinowitsch E."/>
            <person name="Steffen D."/>
            <person name="Sanders M."/>
            <person name="Ma J."/>
            <person name="Kohara Y."/>
            <person name="Sharp S."/>
            <person name="Simmonds M.N."/>
            <person name="Spiegler S."/>
            <person name="Tivey A."/>
            <person name="Sugano S."/>
            <person name="White B."/>
            <person name="Walker D."/>
            <person name="Woodward J.R."/>
            <person name="Winckler T."/>
            <person name="Tanaka Y."/>
            <person name="Shaulsky G."/>
            <person name="Schleicher M."/>
            <person name="Weinstock G.M."/>
            <person name="Rosenthal A."/>
            <person name="Cox E.C."/>
            <person name="Chisholm R.L."/>
            <person name="Gibbs R.A."/>
            <person name="Loomis W.F."/>
            <person name="Platzer M."/>
            <person name="Kay R.R."/>
            <person name="Williams J.G."/>
            <person name="Dear P.H."/>
            <person name="Noegel A.A."/>
            <person name="Barrell B.G."/>
            <person name="Kuspa A."/>
        </authorList>
    </citation>
    <scope>NUCLEOTIDE SEQUENCE [LARGE SCALE GENOMIC DNA]</scope>
    <source>
        <strain>AX4</strain>
    </source>
</reference>
<sequence>MELEEVGVEANQPNNDQGSKKQNKNKDKKVKKEKKIGYGGKKSAEENSNFISWLTFSWADRFVVHCFRHVLQLSHIWDLASYDKSAYLAEKIAISWDVEIKKPKPSYIRAAFRAFGLYFVLSWFFYAIYAASQFVGPEILKRMVTFVLKSRSGISTEDPNMGYYYALIMFGSAMIGSVCLYQSNMISARTGDRLRSVIVLDVYRKAIKLSNSARANTSPGEIVNLMSNDAQRMVEVFQLVNNGVFALPQIIVCLALLYRAIGWPTFVGLGLMLAAVPFNGIAAKKLTEIRRHLVGFTDKRVKTTNEILQAIKIIKLYAWEDSFAKKVIERREAEIKLLFSFSRYRAMLIVIVAALPTAVSVLVFSSYYGYYKKLDAGEIFAALSYLNILRLPLGFLPIIVALGIQMKIAAQRVTDFLLLPEMKEISKIEDPSIENGIYIRDATLTWNQEKKEESFTLKNINFEAKGKTLTMIVGSVGSGKSSLIQAMLGEMDVLDGSVAMKGNVAYVPQQAWIINATLKDNILFGSPYDEAKYRKVLEVCALERDIELFPQGDLVEIGERGVNLSGGQKQRVSIARAVYSDSDVYILDDPLSAVDAHVGKHLFHRCFKGILKSKTVILAANQLNYLPFAHNTVVLKAGEISERGSYQQLINAQKEFSGLLQAYGVDESAVNEDVEDDKEIEESDNIVVEEKTKPTEKPKLQNKDGVLTSQEEREEGAVAMWVYWKYITVGGGFLFLMAFIFFLMDTGTRTFVDWWLSHWQNESTKNALAVAQGLEPSGLTDTQYLGIYIGVGMTSILISAGRNFLFFEYTVRASRALHHQLFNALLRAPMSFFDTTPLGRIINRFTRDLDGVDNLMATSISQFLVFFTTVVATLIIISIITPFLLVPLAPICIIFYFLQFFYRYTSRELQRLEAISRSPIFSHFSETLGGVVSIRAYRKKEENILTNQFRLDNNNKCYLTLQAMNQWLGLRLDLLANLVTFFACLFITIDRDTISAANVGLSLSYALSLTGNLNRATLQAADTETKMNSVERITHYIKGPVEALQIVEDHRPAPDWPPHGAITFDNLVMRYREGLDPVLKGISCEIKAKEKIGIVGRTGAGKSSIVLALFRLIEASEGAILIDGENIAKFGLKDLRRNLAIIPQDPVLFSGTLRENIDPFNEKTDDQLWSVLKDIQLHDVAKSLEGGLDSKVTENGDNWSVGQRQLLCLARALLRDPKILVLDEATASVDGHSDSLIQATIREKFSNCTILTIAHRLNTIMDSDRIIVLDAGKISEFDEPWTLLQNPAGLLNWLVEETGPQNAAYLRRLAQAKKDGVNIDQITPPISPTPEQKPFKNADIDNINSPPQQSLKAEDNPNPKALDNSGDNNNNNNNNNNNNNNNNNNNNNNNNNNNNNDNDNDNDNDNSEAGDN</sequence>